<proteinExistence type="evidence at protein level"/>
<accession>P0AGJ2</accession>
<accession>P19396</accession>
<accession>Q2M7W4</accession>
<evidence type="ECO:0000255" key="1">
    <source>
        <dbReference type="HAMAP-Rule" id="MF_02060"/>
    </source>
</evidence>
<evidence type="ECO:0000269" key="2">
    <source>
    </source>
</evidence>
<evidence type="ECO:0000303" key="3">
    <source>
    </source>
</evidence>
<evidence type="ECO:0000303" key="4">
    <source>
    </source>
</evidence>
<evidence type="ECO:0000305" key="5"/>
<evidence type="ECO:0007829" key="6">
    <source>
        <dbReference type="PDB" id="7EDC"/>
    </source>
</evidence>
<dbReference type="EC" id="2.1.1.34" evidence="1 2"/>
<dbReference type="EMBL" id="M24503">
    <property type="protein sequence ID" value="AAB00161.1"/>
    <property type="molecule type" value="Genomic_DNA"/>
</dbReference>
<dbReference type="EMBL" id="L10328">
    <property type="protein sequence ID" value="AAA62004.1"/>
    <property type="molecule type" value="Genomic_DNA"/>
</dbReference>
<dbReference type="EMBL" id="U00096">
    <property type="protein sequence ID" value="AAC76675.1"/>
    <property type="molecule type" value="Genomic_DNA"/>
</dbReference>
<dbReference type="EMBL" id="AP009048">
    <property type="protein sequence ID" value="BAE77642.1"/>
    <property type="molecule type" value="Genomic_DNA"/>
</dbReference>
<dbReference type="PIR" id="JV0043">
    <property type="entry name" value="JV0043"/>
</dbReference>
<dbReference type="RefSeq" id="NP_418108.1">
    <property type="nucleotide sequence ID" value="NC_000913.3"/>
</dbReference>
<dbReference type="RefSeq" id="WP_001070177.1">
    <property type="nucleotide sequence ID" value="NZ_STEB01000024.1"/>
</dbReference>
<dbReference type="PDB" id="7EDC">
    <property type="method" value="X-ray"/>
    <property type="resolution" value="1.95 A"/>
    <property type="chains" value="A=1-229"/>
</dbReference>
<dbReference type="PDBsum" id="7EDC"/>
<dbReference type="SMR" id="P0AGJ2"/>
<dbReference type="BioGRID" id="4262569">
    <property type="interactions" value="166"/>
</dbReference>
<dbReference type="BioGRID" id="852468">
    <property type="interactions" value="7"/>
</dbReference>
<dbReference type="DIP" id="DIP-35977N"/>
<dbReference type="FunCoup" id="P0AGJ2">
    <property type="interactions" value="277"/>
</dbReference>
<dbReference type="IntAct" id="P0AGJ2">
    <property type="interactions" value="11"/>
</dbReference>
<dbReference type="STRING" id="511145.b3651"/>
<dbReference type="jPOST" id="P0AGJ2"/>
<dbReference type="PaxDb" id="511145-b3651"/>
<dbReference type="EnsemblBacteria" id="AAC76675">
    <property type="protein sequence ID" value="AAC76675"/>
    <property type="gene ID" value="b3651"/>
</dbReference>
<dbReference type="GeneID" id="93778366"/>
<dbReference type="GeneID" id="948161"/>
<dbReference type="KEGG" id="ecj:JW3626"/>
<dbReference type="KEGG" id="eco:b3651"/>
<dbReference type="KEGG" id="ecoc:C3026_19780"/>
<dbReference type="PATRIC" id="fig|1411691.4.peg.3055"/>
<dbReference type="EchoBASE" id="EB0960"/>
<dbReference type="eggNOG" id="COG0566">
    <property type="taxonomic scope" value="Bacteria"/>
</dbReference>
<dbReference type="HOGENOM" id="CLU_021322_4_2_6"/>
<dbReference type="InParanoid" id="P0AGJ2"/>
<dbReference type="OMA" id="KIPMVGF"/>
<dbReference type="OrthoDB" id="9794400at2"/>
<dbReference type="PhylomeDB" id="P0AGJ2"/>
<dbReference type="BioCyc" id="EcoCyc:EG10967-MONOMER"/>
<dbReference type="BioCyc" id="MetaCyc:EG10967-MONOMER"/>
<dbReference type="PRO" id="PR:P0AGJ2"/>
<dbReference type="Proteomes" id="UP000000625">
    <property type="component" value="Chromosome"/>
</dbReference>
<dbReference type="GO" id="GO:0141100">
    <property type="term" value="F:tRNA (guanine(18)-2'-O)-methyltransferase activity"/>
    <property type="evidence" value="ECO:0007669"/>
    <property type="project" value="UniProtKB-UniRule"/>
</dbReference>
<dbReference type="GO" id="GO:0000049">
    <property type="term" value="F:tRNA binding"/>
    <property type="evidence" value="ECO:0007669"/>
    <property type="project" value="UniProtKB-UniRule"/>
</dbReference>
<dbReference type="GO" id="GO:0002938">
    <property type="term" value="P:tRNA guanine ribose methylation"/>
    <property type="evidence" value="ECO:0000315"/>
    <property type="project" value="EcoCyc"/>
</dbReference>
<dbReference type="GO" id="GO:0030488">
    <property type="term" value="P:tRNA methylation"/>
    <property type="evidence" value="ECO:0000304"/>
    <property type="project" value="EcoliWiki"/>
</dbReference>
<dbReference type="CDD" id="cd18092">
    <property type="entry name" value="SpoU-like_TrmH"/>
    <property type="match status" value="1"/>
</dbReference>
<dbReference type="FunFam" id="3.40.1280.10:FF:000009">
    <property type="entry name" value="tRNA (guanosine(18)-2'-O)-methyltransferase"/>
    <property type="match status" value="1"/>
</dbReference>
<dbReference type="Gene3D" id="3.40.1280.10">
    <property type="match status" value="1"/>
</dbReference>
<dbReference type="HAMAP" id="MF_02060">
    <property type="entry name" value="tRNA_methyltr_TrmH"/>
    <property type="match status" value="1"/>
</dbReference>
<dbReference type="InterPro" id="IPR029028">
    <property type="entry name" value="Alpha/beta_knot_MTases"/>
</dbReference>
<dbReference type="InterPro" id="IPR022724">
    <property type="entry name" value="rRNA_MeTrfase_SpoU_C"/>
</dbReference>
<dbReference type="InterPro" id="IPR001537">
    <property type="entry name" value="SpoU_MeTrfase"/>
</dbReference>
<dbReference type="InterPro" id="IPR033671">
    <property type="entry name" value="TrmH"/>
</dbReference>
<dbReference type="InterPro" id="IPR029026">
    <property type="entry name" value="tRNA_m1G_MTases_N"/>
</dbReference>
<dbReference type="NCBIfam" id="NF008295">
    <property type="entry name" value="PRK11081.1"/>
    <property type="match status" value="1"/>
</dbReference>
<dbReference type="PANTHER" id="PTHR43453">
    <property type="entry name" value="RRNA METHYLASE-LIKE"/>
    <property type="match status" value="1"/>
</dbReference>
<dbReference type="PANTHER" id="PTHR43453:SF1">
    <property type="entry name" value="TRNA_RRNA METHYLTRANSFERASE SPOU TYPE DOMAIN-CONTAINING PROTEIN"/>
    <property type="match status" value="1"/>
</dbReference>
<dbReference type="Pfam" id="PF12105">
    <property type="entry name" value="SpoU_methylas_C"/>
    <property type="match status" value="1"/>
</dbReference>
<dbReference type="Pfam" id="PF00588">
    <property type="entry name" value="SpoU_methylase"/>
    <property type="match status" value="1"/>
</dbReference>
<dbReference type="SUPFAM" id="SSF75217">
    <property type="entry name" value="alpha/beta knot"/>
    <property type="match status" value="1"/>
</dbReference>
<keyword id="KW-0002">3D-structure</keyword>
<keyword id="KW-0489">Methyltransferase</keyword>
<keyword id="KW-1185">Reference proteome</keyword>
<keyword id="KW-0694">RNA-binding</keyword>
<keyword id="KW-0949">S-adenosyl-L-methionine</keyword>
<keyword id="KW-0808">Transferase</keyword>
<keyword id="KW-0819">tRNA processing</keyword>
<keyword id="KW-0820">tRNA-binding</keyword>
<feature type="chain" id="PRO_0000159772" description="tRNA (guanosine(18)-2'-O)-methyltransferase">
    <location>
        <begin position="1"/>
        <end position="229"/>
    </location>
</feature>
<feature type="binding site" evidence="1">
    <location>
        <position position="96"/>
    </location>
    <ligand>
        <name>S-adenosyl-L-methionine</name>
        <dbReference type="ChEBI" id="CHEBI:59789"/>
    </ligand>
</feature>
<feature type="binding site" evidence="1">
    <location>
        <position position="139"/>
    </location>
    <ligand>
        <name>S-adenosyl-L-methionine</name>
        <dbReference type="ChEBI" id="CHEBI:59789"/>
    </ligand>
</feature>
<feature type="binding site" evidence="1">
    <location>
        <position position="148"/>
    </location>
    <ligand>
        <name>S-adenosyl-L-methionine</name>
        <dbReference type="ChEBI" id="CHEBI:59789"/>
    </ligand>
</feature>
<feature type="helix" evidence="6">
    <location>
        <begin position="3"/>
        <end position="14"/>
    </location>
</feature>
<feature type="strand" evidence="6">
    <location>
        <begin position="20"/>
        <end position="26"/>
    </location>
</feature>
<feature type="helix" evidence="6">
    <location>
        <begin position="30"/>
        <end position="42"/>
    </location>
</feature>
<feature type="strand" evidence="6">
    <location>
        <begin position="46"/>
        <end position="51"/>
    </location>
</feature>
<feature type="helix" evidence="6">
    <location>
        <begin position="55"/>
        <end position="60"/>
    </location>
</feature>
<feature type="helix" evidence="6">
    <location>
        <begin position="62"/>
        <end position="65"/>
    </location>
</feature>
<feature type="strand" evidence="6">
    <location>
        <begin position="72"/>
        <end position="78"/>
    </location>
</feature>
<feature type="helix" evidence="6">
    <location>
        <begin position="79"/>
        <end position="88"/>
    </location>
</feature>
<feature type="strand" evidence="6">
    <location>
        <begin position="92"/>
        <end position="96"/>
    </location>
</feature>
<feature type="helix" evidence="6">
    <location>
        <begin position="105"/>
        <end position="107"/>
    </location>
</feature>
<feature type="strand" evidence="6">
    <location>
        <begin position="114"/>
        <end position="120"/>
    </location>
</feature>
<feature type="turn" evidence="6">
    <location>
        <begin position="121"/>
        <end position="123"/>
    </location>
</feature>
<feature type="helix" evidence="6">
    <location>
        <begin position="127"/>
        <end position="132"/>
    </location>
</feature>
<feature type="strand" evidence="6">
    <location>
        <begin position="134"/>
        <end position="138"/>
    </location>
</feature>
<feature type="helix" evidence="6">
    <location>
        <begin position="150"/>
        <end position="167"/>
    </location>
</feature>
<feature type="turn" evidence="6">
    <location>
        <begin position="168"/>
        <end position="171"/>
    </location>
</feature>
<feature type="helix" evidence="6">
    <location>
        <begin position="180"/>
        <end position="191"/>
    </location>
</feature>
<feature type="helix" evidence="6">
    <location>
        <begin position="193"/>
        <end position="201"/>
    </location>
</feature>
<feature type="helix" evidence="6">
    <location>
        <begin position="219"/>
        <end position="226"/>
    </location>
</feature>
<comment type="function">
    <text evidence="2">Catalyzes the 2'-O methylation of guanosine at position 18 in tRNA. Type II methylase, which methylates only a subset of tRNA species.</text>
</comment>
<comment type="catalytic activity">
    <reaction evidence="1 2">
        <text>guanosine(18) in tRNA + S-adenosyl-L-methionine = 2'-O-methylguanosine(18) in tRNA + S-adenosyl-L-homocysteine + H(+)</text>
        <dbReference type="Rhea" id="RHEA:20077"/>
        <dbReference type="Rhea" id="RHEA-COMP:10190"/>
        <dbReference type="Rhea" id="RHEA-COMP:10192"/>
        <dbReference type="ChEBI" id="CHEBI:15378"/>
        <dbReference type="ChEBI" id="CHEBI:57856"/>
        <dbReference type="ChEBI" id="CHEBI:59789"/>
        <dbReference type="ChEBI" id="CHEBI:74269"/>
        <dbReference type="ChEBI" id="CHEBI:74445"/>
        <dbReference type="EC" id="2.1.1.34"/>
    </reaction>
</comment>
<comment type="similarity">
    <text evidence="1">Belongs to the class IV-like SAM-binding methyltransferase superfamily. RNA methyltransferase TrmH family.</text>
</comment>
<organism>
    <name type="scientific">Escherichia coli (strain K12)</name>
    <dbReference type="NCBI Taxonomy" id="83333"/>
    <lineage>
        <taxon>Bacteria</taxon>
        <taxon>Pseudomonadati</taxon>
        <taxon>Pseudomonadota</taxon>
        <taxon>Gammaproteobacteria</taxon>
        <taxon>Enterobacterales</taxon>
        <taxon>Enterobacteriaceae</taxon>
        <taxon>Escherichia</taxon>
    </lineage>
</organism>
<sequence length="229" mass="25343">MNPTRYARICEMLARRQPDLTVCMEQVHKPHNVSAIIRTADAVGVHEVHAVWPGSRMRTMASAAAGSNSWVQVKTHRTIGDAVAHLKGQGMQILATHLSDNAVDFREIDYTRPTCILMGQEKTGITQEALALADQDIIIPMIGMVQSLNVSVASALILYEAQRQRQNAGMYLRENSMLPEAEQQRLLFEGGYPVLAKVAKRKGLPYPHVNQQGEIEADADWWATMQAAG</sequence>
<name>TRMH_ECOLI</name>
<gene>
    <name evidence="1 4" type="primary">trmH</name>
    <name evidence="3" type="synonym">spoU</name>
    <name type="ordered locus">b3651</name>
    <name type="ordered locus">JW3626</name>
</gene>
<reference key="1">
    <citation type="journal article" date="1989" name="J. Biol. Chem.">
        <title>Characterization of the spoT gene of Escherichia coli.</title>
        <authorList>
            <person name="Sarubbi E."/>
            <person name="Rudd K.E."/>
            <person name="Xiao H."/>
            <person name="Ikehara K."/>
            <person name="Kalman M."/>
            <person name="Cashel M."/>
        </authorList>
    </citation>
    <scope>NUCLEOTIDE SEQUENCE [GENOMIC DNA]</scope>
    <source>
        <strain>K12 / JM109 / ATCC 53323</strain>
    </source>
</reference>
<reference key="2">
    <citation type="journal article" date="1993" name="Genomics">
        <title>DNA sequence and analysis of 136 kilobases of the Escherichia coli genome: organizational symmetry around the origin of replication.</title>
        <authorList>
            <person name="Burland V.D."/>
            <person name="Plunkett G. III"/>
            <person name="Daniels D.L."/>
            <person name="Blattner F.R."/>
        </authorList>
    </citation>
    <scope>NUCLEOTIDE SEQUENCE [LARGE SCALE GENOMIC DNA]</scope>
    <source>
        <strain>K12 / MG1655 / ATCC 47076</strain>
    </source>
</reference>
<reference key="3">
    <citation type="journal article" date="1997" name="Science">
        <title>The complete genome sequence of Escherichia coli K-12.</title>
        <authorList>
            <person name="Blattner F.R."/>
            <person name="Plunkett G. III"/>
            <person name="Bloch C.A."/>
            <person name="Perna N.T."/>
            <person name="Burland V."/>
            <person name="Riley M."/>
            <person name="Collado-Vides J."/>
            <person name="Glasner J.D."/>
            <person name="Rode C.K."/>
            <person name="Mayhew G.F."/>
            <person name="Gregor J."/>
            <person name="Davis N.W."/>
            <person name="Kirkpatrick H.A."/>
            <person name="Goeden M.A."/>
            <person name="Rose D.J."/>
            <person name="Mau B."/>
            <person name="Shao Y."/>
        </authorList>
    </citation>
    <scope>NUCLEOTIDE SEQUENCE [LARGE SCALE GENOMIC DNA]</scope>
    <source>
        <strain>K12 / MG1655 / ATCC 47076</strain>
    </source>
</reference>
<reference key="4">
    <citation type="journal article" date="2006" name="Mol. Syst. Biol.">
        <title>Highly accurate genome sequences of Escherichia coli K-12 strains MG1655 and W3110.</title>
        <authorList>
            <person name="Hayashi K."/>
            <person name="Morooka N."/>
            <person name="Yamamoto Y."/>
            <person name="Fujita K."/>
            <person name="Isono K."/>
            <person name="Choi S."/>
            <person name="Ohtsubo E."/>
            <person name="Baba T."/>
            <person name="Wanner B.L."/>
            <person name="Mori H."/>
            <person name="Horiuchi T."/>
        </authorList>
    </citation>
    <scope>NUCLEOTIDE SEQUENCE [LARGE SCALE GENOMIC DNA]</scope>
    <source>
        <strain>K12 / W3110 / ATCC 27325 / DSM 5911</strain>
    </source>
</reference>
<reference key="5">
    <citation type="journal article" date="1991" name="J. Biol. Chem.">
        <title>Residual guanosine 3',5'-bispyrophosphate synthetic activity of relA null mutants can be eliminated by spoT null mutations.</title>
        <authorList>
            <person name="Xiao H."/>
            <person name="Kalman M."/>
            <person name="Ikehara K."/>
            <person name="Zemel S."/>
            <person name="Glaser G."/>
            <person name="Cashel M."/>
        </authorList>
    </citation>
    <scope>GENE NAME</scope>
</reference>
<reference key="6">
    <citation type="journal article" date="1993" name="Nucleic Acids Res.">
        <title>SpoU protein of Escherichia coli belongs to a new family of putative rRNA methylases.</title>
        <authorList>
            <person name="Koonin E.V."/>
            <person name="Rudd K.E."/>
        </authorList>
    </citation>
    <scope>POSSIBLE FUNCTION</scope>
</reference>
<reference key="7">
    <citation type="journal article" date="1997" name="Nucleic Acids Res.">
        <title>The spoU gene of Escherichia coli, the fourth gene of the spoT operon, is essential for tRNA (Gm18) 2'-O-methyltransferase activity.</title>
        <authorList>
            <person name="Persson B.C."/>
            <person name="Jaeger G."/>
            <person name="Gustafsson C."/>
        </authorList>
    </citation>
    <scope>FUNCTION</scope>
    <scope>CATALYTIC ACTIVITY</scope>
</reference>
<protein>
    <recommendedName>
        <fullName evidence="1 5">tRNA (guanosine(18)-2'-O)-methyltransferase</fullName>
        <ecNumber evidence="1 2">2.1.1.34</ecNumber>
    </recommendedName>
    <alternativeName>
        <fullName evidence="1 5">tRNA [Gm18] methyltransferase</fullName>
    </alternativeName>
</protein>